<protein>
    <recommendedName>
        <fullName evidence="4">Hexose transporter 1</fullName>
        <shortName evidence="4">PkHT1</shortName>
    </recommendedName>
</protein>
<proteinExistence type="evidence at protein level"/>
<comment type="function">
    <text evidence="1 3">Sodium-independent facilitative hexose transporter (By similarity). Can transport D-glucose and D-fructose (PubMed:12238947). Can transport D-mannose, D-galactose, D-xylose and D-glucosamine (By similarity).</text>
</comment>
<comment type="catalytic activity">
    <reaction evidence="3">
        <text>D-glucose(out) = D-glucose(in)</text>
        <dbReference type="Rhea" id="RHEA:60376"/>
        <dbReference type="ChEBI" id="CHEBI:4167"/>
    </reaction>
    <physiologicalReaction direction="left-to-right" evidence="6">
        <dbReference type="Rhea" id="RHEA:60377"/>
    </physiologicalReaction>
</comment>
<comment type="catalytic activity">
    <reaction evidence="3">
        <text>D-fructose(out) = D-fructose(in)</text>
        <dbReference type="Rhea" id="RHEA:60372"/>
        <dbReference type="ChEBI" id="CHEBI:37721"/>
    </reaction>
    <physiologicalReaction direction="left-to-right" evidence="6">
        <dbReference type="Rhea" id="RHEA:60373"/>
    </physiologicalReaction>
</comment>
<comment type="catalytic activity">
    <reaction evidence="1">
        <text>D-galactose(in) = D-galactose(out)</text>
        <dbReference type="Rhea" id="RHEA:34915"/>
        <dbReference type="ChEBI" id="CHEBI:4139"/>
    </reaction>
    <physiologicalReaction direction="right-to-left" evidence="6">
        <dbReference type="Rhea" id="RHEA:34917"/>
    </physiologicalReaction>
</comment>
<comment type="catalytic activity">
    <reaction evidence="1">
        <text>D-mannose(out) = D-mannose(in)</text>
        <dbReference type="Rhea" id="RHEA:78391"/>
        <dbReference type="ChEBI" id="CHEBI:4208"/>
    </reaction>
    <physiologicalReaction direction="left-to-right" evidence="6">
        <dbReference type="Rhea" id="RHEA:78392"/>
    </physiologicalReaction>
</comment>
<comment type="catalytic activity">
    <reaction evidence="1">
        <text>D-glucosamine(out) = D-glucosamine(in)</text>
        <dbReference type="Rhea" id="RHEA:78423"/>
        <dbReference type="ChEBI" id="CHEBI:58723"/>
    </reaction>
    <physiologicalReaction direction="left-to-right" evidence="6">
        <dbReference type="Rhea" id="RHEA:78424"/>
    </physiologicalReaction>
</comment>
<comment type="catalytic activity">
    <reaction evidence="1">
        <text>D-xylose(out) = D-xylose(in)</text>
        <dbReference type="Rhea" id="RHEA:78427"/>
        <dbReference type="ChEBI" id="CHEBI:53455"/>
    </reaction>
    <physiologicalReaction direction="left-to-right" evidence="6">
        <dbReference type="Rhea" id="RHEA:78428"/>
    </physiologicalReaction>
</comment>
<comment type="activity regulation">
    <text evidence="3">Inhibited by cytochalasin B.</text>
</comment>
<comment type="biophysicochemical properties">
    <kinetics>
        <KM evidence="3">0.67 mM for D-glucose</KM>
        <KM evidence="3">5.12 mM for D-fructose</KM>
    </kinetics>
    <temperatureDependence>
        <text evidence="3">Active from 32 to 42 degrees Celsius (PubMed:12238947). Retains 50% of its maximal activity at 20 degrees Celsius (PubMed:12238947).</text>
    </temperatureDependence>
</comment>
<comment type="subunit">
    <text evidence="1">Homodimer.</text>
</comment>
<comment type="subcellular location">
    <subcellularLocation>
        <location evidence="1">Cell membrane</location>
        <topology evidence="2">Multi-pass membrane protein</topology>
    </subcellularLocation>
</comment>
<comment type="miscellaneous">
    <text evidence="3">Experiments with hexose analogs indicate that hydroxyl groups in the C-3, C-4 and C-6 positions in glucose are important for high affinity interactions with HT1.</text>
</comment>
<comment type="similarity">
    <text evidence="6">Belongs to the major facilitator superfamily. Sugar transporter (TC 2.A.1.1) family.</text>
</comment>
<gene>
    <name evidence="6" type="primary">HT1</name>
    <name evidence="8" type="synonym">HT</name>
    <name evidence="8" type="ORF">PKNOH_S08492900</name>
</gene>
<organism evidence="7">
    <name type="scientific">Plasmodium knowlesi</name>
    <dbReference type="NCBI Taxonomy" id="5850"/>
    <lineage>
        <taxon>Eukaryota</taxon>
        <taxon>Sar</taxon>
        <taxon>Alveolata</taxon>
        <taxon>Apicomplexa</taxon>
        <taxon>Aconoidasida</taxon>
        <taxon>Haemosporida</taxon>
        <taxon>Plasmodiidae</taxon>
        <taxon>Plasmodium</taxon>
        <taxon>Plasmodium (Plasmodium)</taxon>
    </lineage>
</organism>
<keyword id="KW-1003">Cell membrane</keyword>
<keyword id="KW-1015">Disulfide bond</keyword>
<keyword id="KW-0472">Membrane</keyword>
<keyword id="KW-0762">Sugar transport</keyword>
<keyword id="KW-0812">Transmembrane</keyword>
<keyword id="KW-1133">Transmembrane helix</keyword>
<keyword id="KW-0813">Transport</keyword>
<accession>Q8I762</accession>
<evidence type="ECO:0000250" key="1">
    <source>
        <dbReference type="UniProtKB" id="Q7KWJ5"/>
    </source>
</evidence>
<evidence type="ECO:0000255" key="2"/>
<evidence type="ECO:0000269" key="3">
    <source>
    </source>
</evidence>
<evidence type="ECO:0000303" key="4">
    <source>
    </source>
</evidence>
<evidence type="ECO:0000303" key="5">
    <source>
    </source>
</evidence>
<evidence type="ECO:0000305" key="6"/>
<evidence type="ECO:0000312" key="7">
    <source>
        <dbReference type="EMBL" id="CAD32939.1"/>
    </source>
</evidence>
<evidence type="ECO:0000312" key="8">
    <source>
        <dbReference type="EMBL" id="OTN66844.1"/>
    </source>
</evidence>
<feature type="chain" id="PRO_0000460198" description="Hexose transporter 1">
    <location>
        <begin position="1"/>
        <end position="500"/>
    </location>
</feature>
<feature type="topological domain" description="Cytoplasmic" evidence="6">
    <location>
        <begin position="1"/>
        <end position="25"/>
    </location>
</feature>
<feature type="transmembrane region" description="Helical" evidence="2">
    <location>
        <begin position="26"/>
        <end position="46"/>
    </location>
</feature>
<feature type="topological domain" description="Extracellular" evidence="6">
    <location>
        <begin position="47"/>
        <end position="75"/>
    </location>
</feature>
<feature type="transmembrane region" description="Helical" evidence="2">
    <location>
        <begin position="76"/>
        <end position="96"/>
    </location>
</feature>
<feature type="topological domain" description="Cytoplasmic" evidence="6">
    <location>
        <begin position="97"/>
        <end position="101"/>
    </location>
</feature>
<feature type="transmembrane region" description="Helical" evidence="2">
    <location>
        <begin position="102"/>
        <end position="122"/>
    </location>
</feature>
<feature type="topological domain" description="Extracellular" evidence="6">
    <location>
        <begin position="123"/>
        <end position="131"/>
    </location>
</feature>
<feature type="transmembrane region" description="Helical" evidence="2">
    <location>
        <begin position="132"/>
        <end position="152"/>
    </location>
</feature>
<feature type="topological domain" description="Cytoplasmic" evidence="6">
    <location>
        <begin position="153"/>
        <end position="166"/>
    </location>
</feature>
<feature type="transmembrane region" description="Helical" evidence="2">
    <location>
        <begin position="167"/>
        <end position="187"/>
    </location>
</feature>
<feature type="topological domain" description="Extracellular" evidence="6">
    <location>
        <begin position="188"/>
        <end position="203"/>
    </location>
</feature>
<feature type="transmembrane region" description="Helical" evidence="2">
    <location>
        <begin position="204"/>
        <end position="224"/>
    </location>
</feature>
<feature type="topological domain" description="Cytoplasmic" evidence="6">
    <location>
        <begin position="225"/>
        <end position="289"/>
    </location>
</feature>
<feature type="transmembrane region" description="Helical" evidence="2">
    <location>
        <begin position="290"/>
        <end position="310"/>
    </location>
</feature>
<feature type="topological domain" description="Extracellular" evidence="6">
    <location>
        <begin position="311"/>
        <end position="327"/>
    </location>
</feature>
<feature type="transmembrane region" description="Helical" evidence="2">
    <location>
        <begin position="328"/>
        <end position="348"/>
    </location>
</feature>
<feature type="topological domain" description="Cytoplasmic" evidence="6">
    <location>
        <begin position="349"/>
        <end position="356"/>
    </location>
</feature>
<feature type="transmembrane region" description="Helical" evidence="2">
    <location>
        <begin position="357"/>
        <end position="377"/>
    </location>
</feature>
<feature type="topological domain" description="Extracellular" evidence="6">
    <location>
        <begin position="378"/>
        <end position="390"/>
    </location>
</feature>
<feature type="transmembrane region" description="Helical" evidence="2">
    <location>
        <begin position="391"/>
        <end position="411"/>
    </location>
</feature>
<feature type="topological domain" description="Cytoplasmic" evidence="6">
    <location>
        <begin position="412"/>
        <end position="425"/>
    </location>
</feature>
<feature type="transmembrane region" description="Helical" evidence="2">
    <location>
        <begin position="426"/>
        <end position="446"/>
    </location>
</feature>
<feature type="topological domain" description="Extracellular" evidence="6">
    <location>
        <begin position="447"/>
        <end position="451"/>
    </location>
</feature>
<feature type="transmembrane region" description="Helical" evidence="2">
    <location>
        <begin position="452"/>
        <end position="472"/>
    </location>
</feature>
<feature type="topological domain" description="Cytoplasmic" evidence="6">
    <location>
        <begin position="473"/>
        <end position="500"/>
    </location>
</feature>
<feature type="binding site" evidence="1">
    <location>
        <position position="166"/>
    </location>
    <ligand>
        <name>alpha-D-glucose</name>
        <dbReference type="ChEBI" id="CHEBI:17925"/>
    </ligand>
</feature>
<feature type="binding site" evidence="1">
    <location>
        <position position="166"/>
    </location>
    <ligand>
        <name>beta-D-glucose</name>
        <dbReference type="ChEBI" id="CHEBI:15903"/>
    </ligand>
</feature>
<feature type="binding site" evidence="1">
    <location>
        <position position="301"/>
    </location>
    <ligand>
        <name>alpha-D-glucose</name>
        <dbReference type="ChEBI" id="CHEBI:17925"/>
    </ligand>
</feature>
<feature type="binding site" evidence="1">
    <location>
        <position position="301"/>
    </location>
    <ligand>
        <name>beta-D-glucose</name>
        <dbReference type="ChEBI" id="CHEBI:15903"/>
    </ligand>
</feature>
<feature type="binding site" evidence="1">
    <location>
        <position position="302"/>
    </location>
    <ligand>
        <name>alpha-D-glucose</name>
        <dbReference type="ChEBI" id="CHEBI:17925"/>
    </ligand>
</feature>
<feature type="binding site" evidence="1">
    <location>
        <position position="307"/>
    </location>
    <ligand>
        <name>alpha-D-glucose</name>
        <dbReference type="ChEBI" id="CHEBI:17925"/>
    </ligand>
</feature>
<feature type="binding site" evidence="1">
    <location>
        <position position="307"/>
    </location>
    <ligand>
        <name>beta-D-glucose</name>
        <dbReference type="ChEBI" id="CHEBI:15903"/>
    </ligand>
</feature>
<feature type="binding site" evidence="1">
    <location>
        <position position="337"/>
    </location>
    <ligand>
        <name>beta-D-glucose</name>
        <dbReference type="ChEBI" id="CHEBI:15903"/>
    </ligand>
</feature>
<feature type="binding site" evidence="1">
    <location>
        <position position="408"/>
    </location>
    <ligand>
        <name>alpha-D-glucose</name>
        <dbReference type="ChEBI" id="CHEBI:17925"/>
    </ligand>
</feature>
<feature type="disulfide bond" evidence="1">
    <location>
        <begin position="60"/>
        <end position="67"/>
    </location>
</feature>
<reference evidence="7" key="1">
    <citation type="journal article" date="2002" name="Biochem. J.">
        <title>Comparative characterization of hexose transporters of Plasmodium knowlesi, Plasmodium yoelii and Toxoplasma gondii highlights functional differences within the apicomplexan family.</title>
        <authorList>
            <person name="Joet T."/>
            <person name="Holterman L."/>
            <person name="Stedman T.T."/>
            <person name="Kocken C.H."/>
            <person name="Van Der Wel A."/>
            <person name="Thomas A.W."/>
            <person name="Krishna S."/>
        </authorList>
    </citation>
    <scope>NUCLEOTIDE SEQUENCE [GENOMIC DNA]</scope>
    <scope>FUNCTION</scope>
    <scope>TRANSPORTER ACTIVITY</scope>
    <scope>ACTIVITY REGULATION</scope>
    <scope>BIOPHYSICOCHEMICAL PROPERTIES</scope>
    <source>
        <strain evidence="7">H</strain>
    </source>
</reference>
<reference evidence="8" key="2">
    <citation type="journal article" date="2018" name="Parasitology">
        <title>PacBio assembly of a Plasmodium knowlesi genome sequence with Hi-C correction and manual annotation of the SICAvar gene family.</title>
        <authorList>
            <consortium name="MaHPIC consortium"/>
            <person name="Lapp S.A."/>
            <person name="Geraldo J.A."/>
            <person name="Chien J.T."/>
            <person name="Ay F."/>
            <person name="Pakala S.B."/>
            <person name="Batugedara G."/>
            <person name="Humphrey J."/>
            <person name="DeBarry J.D."/>
            <person name="Le Roch K.G."/>
            <person name="Galinski M.R."/>
            <person name="Kissinger J.C."/>
        </authorList>
    </citation>
    <scope>NUCLEOTIDE SEQUENCE [LARGE SCALE GENOMIC DNA]</scope>
    <source>
        <strain evidence="5">Malayan Strain Pk1(A+)</strain>
    </source>
</reference>
<name>HXT1_PLAKN</name>
<sequence length="500" mass="55605">MKNSNEISSSQSLKNNGSDGFFNTSLMYVLAACLASFLFGYQVSVLNTIKDFIVIEFGWCAGKEVNCDDSTLKSSFLLASVFIGAVVGSGFSGFLVQHGRRFSLLVIYNFFILVSILTSITHHFHTILFSRLLSGFGIGLITVSVPMYISEMTHKDKKGAYGVLHQLFITFGIFIAVLLGMAMGNVPEEVNNPLGTFQQIWWRLMFFFPCIISILGIVLLTFFFKEETPYYLFEKGKVEESKEILKKIYGSDDVDEPLKAIKDAVEQNEAAKKNSISLMRAMKIPSYRYVILLGCILSGLQQFTGINVLVSNSNALYKGFLTNEWITTLSVIMTVVNFLMTFPAIYIVEKLGRKTLLLCGCAGIVCAFLPTAIANLINNTSDVVKKLSISATFVMIVSFAVSYGPVLWIYLHEMFPSEIKDSAASLASLVNWMCAIIVVFPSDIIIKQSPTILFFIFSGMSIVAFLFIFFFIKETKGGEIGTSPYITLEERQKHMGKSVV</sequence>
<dbReference type="EMBL" id="AJ488937">
    <property type="protein sequence ID" value="CAD32939.1"/>
    <property type="molecule type" value="Genomic_DNA"/>
</dbReference>
<dbReference type="EMBL" id="NETL01000022">
    <property type="protein sequence ID" value="OTN66844.1"/>
    <property type="molecule type" value="Genomic_DNA"/>
</dbReference>
<dbReference type="SMR" id="Q8I762"/>
<dbReference type="VEuPathDB" id="PlasmoDB:PKA1H_040021100"/>
<dbReference type="VEuPathDB" id="PlasmoDB:PKNH_0416200"/>
<dbReference type="VEuPathDB" id="PlasmoDB:PKNOH_S08492900"/>
<dbReference type="eggNOG" id="KOG0254">
    <property type="taxonomic scope" value="Eukaryota"/>
</dbReference>
<dbReference type="OMA" id="YCISIGA"/>
<dbReference type="OrthoDB" id="3593at418103"/>
<dbReference type="Proteomes" id="UP000195012">
    <property type="component" value="Unassembled WGS sequence"/>
</dbReference>
<dbReference type="GO" id="GO:0005886">
    <property type="term" value="C:plasma membrane"/>
    <property type="evidence" value="ECO:0007669"/>
    <property type="project" value="UniProtKB-SubCell"/>
</dbReference>
<dbReference type="GO" id="GO:0015149">
    <property type="term" value="F:hexose transmembrane transporter activity"/>
    <property type="evidence" value="ECO:0007669"/>
    <property type="project" value="TreeGrafter"/>
</dbReference>
<dbReference type="CDD" id="cd17315">
    <property type="entry name" value="MFS_GLUT_like"/>
    <property type="match status" value="1"/>
</dbReference>
<dbReference type="Gene3D" id="1.20.1250.20">
    <property type="entry name" value="MFS general substrate transporter like domains"/>
    <property type="match status" value="1"/>
</dbReference>
<dbReference type="InterPro" id="IPR045263">
    <property type="entry name" value="GLUT"/>
</dbReference>
<dbReference type="InterPro" id="IPR020846">
    <property type="entry name" value="MFS_dom"/>
</dbReference>
<dbReference type="InterPro" id="IPR005828">
    <property type="entry name" value="MFS_sugar_transport-like"/>
</dbReference>
<dbReference type="InterPro" id="IPR036259">
    <property type="entry name" value="MFS_trans_sf"/>
</dbReference>
<dbReference type="InterPro" id="IPR003663">
    <property type="entry name" value="Sugar/inositol_transpt"/>
</dbReference>
<dbReference type="InterPro" id="IPR005829">
    <property type="entry name" value="Sugar_transporter_CS"/>
</dbReference>
<dbReference type="NCBIfam" id="TIGR00879">
    <property type="entry name" value="SP"/>
    <property type="match status" value="1"/>
</dbReference>
<dbReference type="PANTHER" id="PTHR23503:SF8">
    <property type="entry name" value="FACILITATED GLUCOSE TRANSPORTER PROTEIN 1"/>
    <property type="match status" value="1"/>
</dbReference>
<dbReference type="PANTHER" id="PTHR23503">
    <property type="entry name" value="SOLUTE CARRIER FAMILY 2"/>
    <property type="match status" value="1"/>
</dbReference>
<dbReference type="Pfam" id="PF00083">
    <property type="entry name" value="Sugar_tr"/>
    <property type="match status" value="1"/>
</dbReference>
<dbReference type="PRINTS" id="PR00171">
    <property type="entry name" value="SUGRTRNSPORT"/>
</dbReference>
<dbReference type="SUPFAM" id="SSF103473">
    <property type="entry name" value="MFS general substrate transporter"/>
    <property type="match status" value="1"/>
</dbReference>
<dbReference type="PROSITE" id="PS50850">
    <property type="entry name" value="MFS"/>
    <property type="match status" value="1"/>
</dbReference>
<dbReference type="PROSITE" id="PS51257">
    <property type="entry name" value="PROKAR_LIPOPROTEIN"/>
    <property type="match status" value="1"/>
</dbReference>
<dbReference type="PROSITE" id="PS00216">
    <property type="entry name" value="SUGAR_TRANSPORT_1"/>
    <property type="match status" value="1"/>
</dbReference>
<dbReference type="PROSITE" id="PS00217">
    <property type="entry name" value="SUGAR_TRANSPORT_2"/>
    <property type="match status" value="1"/>
</dbReference>